<dbReference type="EMBL" id="U09372">
    <property type="protein sequence ID" value="AAA53142.1"/>
    <property type="molecule type" value="Genomic_DNA"/>
</dbReference>
<dbReference type="EMBL" id="AF159421">
    <property type="protein sequence ID" value="AAD46575.1"/>
    <property type="molecule type" value="Genomic_DNA"/>
</dbReference>
<dbReference type="EMBL" id="AE017349">
    <property type="protein sequence ID" value="AAW45486.1"/>
    <property type="molecule type" value="Genomic_DNA"/>
</dbReference>
<dbReference type="RefSeq" id="XP_572793.1">
    <property type="nucleotide sequence ID" value="XM_572793.1"/>
</dbReference>
<dbReference type="SMR" id="P0CN96"/>
<dbReference type="FunCoup" id="P0CN96">
    <property type="interactions" value="127"/>
</dbReference>
<dbReference type="STRING" id="214684.P0CN96"/>
<dbReference type="PaxDb" id="214684-P0CN96"/>
<dbReference type="EnsemblFungi" id="AAW45486">
    <property type="protein sequence ID" value="AAW45486"/>
    <property type="gene ID" value="CNI00520"/>
</dbReference>
<dbReference type="GeneID" id="3259662"/>
<dbReference type="KEGG" id="cne:CNI00520"/>
<dbReference type="VEuPathDB" id="FungiDB:CNI00520"/>
<dbReference type="eggNOG" id="KOG0082">
    <property type="taxonomic scope" value="Eukaryota"/>
</dbReference>
<dbReference type="HOGENOM" id="CLU_014184_0_1_1"/>
<dbReference type="InParanoid" id="P0CN96"/>
<dbReference type="OMA" id="FMAIQAM"/>
<dbReference type="OrthoDB" id="5817230at2759"/>
<dbReference type="PHI-base" id="PHI:75"/>
<dbReference type="Proteomes" id="UP000002149">
    <property type="component" value="Chromosome 9"/>
</dbReference>
<dbReference type="GO" id="GO:0005737">
    <property type="term" value="C:cytoplasm"/>
    <property type="evidence" value="ECO:0000318"/>
    <property type="project" value="GO_Central"/>
</dbReference>
<dbReference type="GO" id="GO:0005834">
    <property type="term" value="C:heterotrimeric G-protein complex"/>
    <property type="evidence" value="ECO:0000318"/>
    <property type="project" value="GO_Central"/>
</dbReference>
<dbReference type="GO" id="GO:0001664">
    <property type="term" value="F:G protein-coupled receptor binding"/>
    <property type="evidence" value="ECO:0000318"/>
    <property type="project" value="GO_Central"/>
</dbReference>
<dbReference type="GO" id="GO:0031683">
    <property type="term" value="F:G-protein beta/gamma-subunit complex binding"/>
    <property type="evidence" value="ECO:0000318"/>
    <property type="project" value="GO_Central"/>
</dbReference>
<dbReference type="GO" id="GO:0005525">
    <property type="term" value="F:GTP binding"/>
    <property type="evidence" value="ECO:0007669"/>
    <property type="project" value="UniProtKB-KW"/>
</dbReference>
<dbReference type="GO" id="GO:0003924">
    <property type="term" value="F:GTPase activity"/>
    <property type="evidence" value="ECO:0000318"/>
    <property type="project" value="GO_Central"/>
</dbReference>
<dbReference type="GO" id="GO:0046872">
    <property type="term" value="F:metal ion binding"/>
    <property type="evidence" value="ECO:0007669"/>
    <property type="project" value="UniProtKB-KW"/>
</dbReference>
<dbReference type="GO" id="GO:0007189">
    <property type="term" value="P:adenylate cyclase-activating G protein-coupled receptor signaling pathway"/>
    <property type="evidence" value="ECO:0000318"/>
    <property type="project" value="GO_Central"/>
</dbReference>
<dbReference type="CDD" id="cd00066">
    <property type="entry name" value="G-alpha"/>
    <property type="match status" value="1"/>
</dbReference>
<dbReference type="FunFam" id="1.10.400.10:FF:000007">
    <property type="entry name" value="Guanine nucleotide-binding protein subunit alpha"/>
    <property type="match status" value="1"/>
</dbReference>
<dbReference type="FunFam" id="3.40.50.300:FF:000181">
    <property type="entry name" value="Guanine nucleotide-binding protein subunit alpha"/>
    <property type="match status" value="1"/>
</dbReference>
<dbReference type="FunFam" id="3.40.50.300:FF:000692">
    <property type="entry name" value="Guanine nucleotide-binding protein subunit alpha"/>
    <property type="match status" value="1"/>
</dbReference>
<dbReference type="Gene3D" id="1.10.400.10">
    <property type="entry name" value="GI Alpha 1, domain 2-like"/>
    <property type="match status" value="1"/>
</dbReference>
<dbReference type="Gene3D" id="3.40.50.300">
    <property type="entry name" value="P-loop containing nucleotide triphosphate hydrolases"/>
    <property type="match status" value="1"/>
</dbReference>
<dbReference type="InterPro" id="IPR002975">
    <property type="entry name" value="Fungi_Gprotein_alpha"/>
</dbReference>
<dbReference type="InterPro" id="IPR001019">
    <property type="entry name" value="Gprotein_alpha_su"/>
</dbReference>
<dbReference type="InterPro" id="IPR011025">
    <property type="entry name" value="GproteinA_insert"/>
</dbReference>
<dbReference type="InterPro" id="IPR027417">
    <property type="entry name" value="P-loop_NTPase"/>
</dbReference>
<dbReference type="PANTHER" id="PTHR10218">
    <property type="entry name" value="GTP-BINDING PROTEIN ALPHA SUBUNIT"/>
    <property type="match status" value="1"/>
</dbReference>
<dbReference type="PANTHER" id="PTHR10218:SF369">
    <property type="entry name" value="GUANINE NUCLEOTIDE-BINDING PROTEIN ALPHA-2 SUBUNIT"/>
    <property type="match status" value="1"/>
</dbReference>
<dbReference type="Pfam" id="PF00503">
    <property type="entry name" value="G-alpha"/>
    <property type="match status" value="1"/>
</dbReference>
<dbReference type="PRINTS" id="PR00318">
    <property type="entry name" value="GPROTEINA"/>
</dbReference>
<dbReference type="PRINTS" id="PR01241">
    <property type="entry name" value="GPROTEINAFNG"/>
</dbReference>
<dbReference type="SMART" id="SM00275">
    <property type="entry name" value="G_alpha"/>
    <property type="match status" value="1"/>
</dbReference>
<dbReference type="SUPFAM" id="SSF52540">
    <property type="entry name" value="P-loop containing nucleoside triphosphate hydrolases"/>
    <property type="match status" value="1"/>
</dbReference>
<dbReference type="SUPFAM" id="SSF47895">
    <property type="entry name" value="Transducin (alpha subunit), insertion domain"/>
    <property type="match status" value="1"/>
</dbReference>
<dbReference type="PROSITE" id="PS51882">
    <property type="entry name" value="G_ALPHA"/>
    <property type="match status" value="1"/>
</dbReference>
<keyword id="KW-0342">GTP-binding</keyword>
<keyword id="KW-0378">Hydrolase</keyword>
<keyword id="KW-0449">Lipoprotein</keyword>
<keyword id="KW-0460">Magnesium</keyword>
<keyword id="KW-0479">Metal-binding</keyword>
<keyword id="KW-0519">Myristate</keyword>
<keyword id="KW-0547">Nucleotide-binding</keyword>
<keyword id="KW-0564">Palmitate</keyword>
<keyword id="KW-1185">Reference proteome</keyword>
<keyword id="KW-0807">Transducer</keyword>
<organism>
    <name type="scientific">Cryptococcus neoformans var. neoformans serotype D (strain JEC21 / ATCC MYA-565)</name>
    <name type="common">Filobasidiella neoformans</name>
    <dbReference type="NCBI Taxonomy" id="214684"/>
    <lineage>
        <taxon>Eukaryota</taxon>
        <taxon>Fungi</taxon>
        <taxon>Dikarya</taxon>
        <taxon>Basidiomycota</taxon>
        <taxon>Agaricomycotina</taxon>
        <taxon>Tremellomycetes</taxon>
        <taxon>Tremellales</taxon>
        <taxon>Cryptococcaceae</taxon>
        <taxon>Cryptococcus</taxon>
        <taxon>Cryptococcus neoformans species complex</taxon>
    </lineage>
</organism>
<reference key="1">
    <citation type="journal article" date="1994" name="Infect. Immun.">
        <title>Cloning of a Cryptococcus neoformans gene, GPA1, encoding a G-protein alpha-subunit homolog.</title>
        <authorList>
            <person name="Tolkacheva T."/>
            <person name="McNamara P."/>
            <person name="Piekarz E."/>
            <person name="Courchesne W."/>
        </authorList>
    </citation>
    <scope>NUCLEOTIDE SEQUENCE [GENOMIC DNA]</scope>
    <source>
        <strain>ATCC 42163 / CBS 7823 / 68-5</strain>
    </source>
</reference>
<reference key="2">
    <citation type="submission" date="1999-06" db="EMBL/GenBank/DDBJ databases">
        <title>The G-protein alpha-subunit GPA1 regulates virulence factors and pathogenicity in a serotype D strain of Cryptococcus neoformans.</title>
        <authorList>
            <person name="Allen B.M."/>
            <person name="Alspaugh J.A."/>
            <person name="Heitman J."/>
        </authorList>
    </citation>
    <scope>NUCLEOTIDE SEQUENCE [GENOMIC DNA]</scope>
    <source>
        <strain>JEC21 / ATCC MYA-565</strain>
    </source>
</reference>
<reference key="3">
    <citation type="journal article" date="2005" name="Science">
        <title>The genome of the basidiomycetous yeast and human pathogen Cryptococcus neoformans.</title>
        <authorList>
            <person name="Loftus B.J."/>
            <person name="Fung E."/>
            <person name="Roncaglia P."/>
            <person name="Rowley D."/>
            <person name="Amedeo P."/>
            <person name="Bruno D."/>
            <person name="Vamathevan J."/>
            <person name="Miranda M."/>
            <person name="Anderson I.J."/>
            <person name="Fraser J.A."/>
            <person name="Allen J.E."/>
            <person name="Bosdet I.E."/>
            <person name="Brent M.R."/>
            <person name="Chiu R."/>
            <person name="Doering T.L."/>
            <person name="Donlin M.J."/>
            <person name="D'Souza C.A."/>
            <person name="Fox D.S."/>
            <person name="Grinberg V."/>
            <person name="Fu J."/>
            <person name="Fukushima M."/>
            <person name="Haas B.J."/>
            <person name="Huang J.C."/>
            <person name="Janbon G."/>
            <person name="Jones S.J.M."/>
            <person name="Koo H.L."/>
            <person name="Krzywinski M.I."/>
            <person name="Kwon-Chung K.J."/>
            <person name="Lengeler K.B."/>
            <person name="Maiti R."/>
            <person name="Marra M.A."/>
            <person name="Marra R.E."/>
            <person name="Mathewson C.A."/>
            <person name="Mitchell T.G."/>
            <person name="Pertea M."/>
            <person name="Riggs F.R."/>
            <person name="Salzberg S.L."/>
            <person name="Schein J.E."/>
            <person name="Shvartsbeyn A."/>
            <person name="Shin H."/>
            <person name="Shumway M."/>
            <person name="Specht C.A."/>
            <person name="Suh B.B."/>
            <person name="Tenney A."/>
            <person name="Utterback T.R."/>
            <person name="Wickes B.L."/>
            <person name="Wortman J.R."/>
            <person name="Wye N.H."/>
            <person name="Kronstad J.W."/>
            <person name="Lodge J.K."/>
            <person name="Heitman J."/>
            <person name="Davis R.W."/>
            <person name="Fraser C.M."/>
            <person name="Hyman R.W."/>
        </authorList>
    </citation>
    <scope>NUCLEOTIDE SEQUENCE [LARGE SCALE GENOMIC DNA]</scope>
    <source>
        <strain>JEC21 / ATCC MYA-565</strain>
    </source>
</reference>
<accession>P0CN96</accession>
<accession>P54853</accession>
<accession>Q55NP0</accession>
<accession>Q5KC25</accession>
<accession>Q9UW41</accession>
<proteinExistence type="inferred from homology"/>
<gene>
    <name type="primary">GPA1</name>
    <name type="ordered locus">CNI00520</name>
</gene>
<evidence type="ECO:0000250" key="1"/>
<evidence type="ECO:0000250" key="2">
    <source>
        <dbReference type="UniProtKB" id="P08539"/>
    </source>
</evidence>
<evidence type="ECO:0000250" key="3">
    <source>
        <dbReference type="UniProtKB" id="P18064"/>
    </source>
</evidence>
<evidence type="ECO:0000255" key="4">
    <source>
        <dbReference type="PROSITE-ProRule" id="PRU01230"/>
    </source>
</evidence>
<evidence type="ECO:0000256" key="5">
    <source>
        <dbReference type="SAM" id="MobiDB-lite"/>
    </source>
</evidence>
<evidence type="ECO:0000305" key="6"/>
<protein>
    <recommendedName>
        <fullName>Guanine nucleotide-binding protein subunit alpha</fullName>
    </recommendedName>
</protein>
<sequence>MGGCMSTPEAPKKTAETKQVPSTSTSSRPPQASTSATATAAGAGTSAANGTANGIKGDTTATNRVGTSGGQGLAAALASTEPPGAQDSKGNKDRSNQIDRQLEDDQKKFRKECKILLLGSGESGKSTIVKQMKIIHQNGYSKDELLSFRGVIYKNVLDSAQALIMAMRKIGVDPEDANNRSYADRILEYRMDAGLDAVIPSEILYNIESLWHDPVIPSVMDRSSEFYLMDSATYFFANIRKIAGPDYVPDEADVLRARTKTTGISETRFNMGQLSIHMFDVGGQRSERKKWIHCFEAVTSIIFCVALSEYDQVLLEESGQNRMQESLVLFESVINSRWFLRTSVILFLNKIDLFKQKLPKVPLVQYFPEYTGGADINKAAKYILWRFTQTNRARLSVYPHLTQATDTSNIRLVFAAVKETILQNALRDSGIL</sequence>
<name>GPA1_CRYNJ</name>
<comment type="function">
    <text>Guanine nucleotide-binding proteins (G proteins) are involved as modulators or transducers in various transmembrane signaling systems. Involved in the mating pathway.</text>
</comment>
<comment type="cofactor">
    <cofactor evidence="3">
        <name>Mg(2+)</name>
        <dbReference type="ChEBI" id="CHEBI:18420"/>
    </cofactor>
</comment>
<comment type="subunit">
    <text>G proteins are composed of 3 units; alpha, beta and gamma. The alpha chain contains the guanine nucleotide binding site.</text>
</comment>
<comment type="similarity">
    <text evidence="6">Belongs to the G-alpha family.</text>
</comment>
<feature type="initiator methionine" description="Removed" evidence="1">
    <location>
        <position position="1"/>
    </location>
</feature>
<feature type="chain" id="PRO_0000203599" description="Guanine nucleotide-binding protein subunit alpha">
    <location>
        <begin position="2"/>
        <end position="432"/>
    </location>
</feature>
<feature type="domain" description="G-alpha" evidence="4">
    <location>
        <begin position="111"/>
        <end position="432"/>
    </location>
</feature>
<feature type="region of interest" description="Disordered" evidence="5">
    <location>
        <begin position="1"/>
        <end position="97"/>
    </location>
</feature>
<feature type="region of interest" description="G1 motif" evidence="4">
    <location>
        <begin position="114"/>
        <end position="127"/>
    </location>
</feature>
<feature type="region of interest" description="G2 motif" evidence="4">
    <location>
        <begin position="253"/>
        <end position="261"/>
    </location>
</feature>
<feature type="region of interest" description="G3 motif" evidence="4">
    <location>
        <begin position="276"/>
        <end position="285"/>
    </location>
</feature>
<feature type="region of interest" description="G4 motif" evidence="4">
    <location>
        <begin position="345"/>
        <end position="352"/>
    </location>
</feature>
<feature type="region of interest" description="G5 motif" evidence="4">
    <location>
        <begin position="402"/>
        <end position="407"/>
    </location>
</feature>
<feature type="compositionally biased region" description="Low complexity" evidence="5">
    <location>
        <begin position="21"/>
        <end position="52"/>
    </location>
</feature>
<feature type="binding site" evidence="3">
    <location>
        <position position="122"/>
    </location>
    <ligand>
        <name>GTP</name>
        <dbReference type="ChEBI" id="CHEBI:37565"/>
    </ligand>
</feature>
<feature type="binding site" evidence="3">
    <location>
        <position position="123"/>
    </location>
    <ligand>
        <name>GTP</name>
        <dbReference type="ChEBI" id="CHEBI:37565"/>
    </ligand>
</feature>
<feature type="binding site" evidence="3">
    <location>
        <position position="124"/>
    </location>
    <ligand>
        <name>GTP</name>
        <dbReference type="ChEBI" id="CHEBI:37565"/>
    </ligand>
</feature>
<feature type="binding site" evidence="3">
    <location>
        <position position="125"/>
    </location>
    <ligand>
        <name>GTP</name>
        <dbReference type="ChEBI" id="CHEBI:37565"/>
    </ligand>
</feature>
<feature type="binding site" evidence="3">
    <location>
        <position position="126"/>
    </location>
    <ligand>
        <name>GTP</name>
        <dbReference type="ChEBI" id="CHEBI:37565"/>
    </ligand>
</feature>
<feature type="binding site" evidence="3">
    <location>
        <position position="126"/>
    </location>
    <ligand>
        <name>Mg(2+)</name>
        <dbReference type="ChEBI" id="CHEBI:18420"/>
    </ligand>
</feature>
<feature type="binding site" evidence="3">
    <location>
        <position position="127"/>
    </location>
    <ligand>
        <name>GTP</name>
        <dbReference type="ChEBI" id="CHEBI:37565"/>
    </ligand>
</feature>
<feature type="binding site" evidence="3">
    <location>
        <position position="230"/>
    </location>
    <ligand>
        <name>GTP</name>
        <dbReference type="ChEBI" id="CHEBI:37565"/>
    </ligand>
</feature>
<feature type="binding site" evidence="3">
    <location>
        <position position="255"/>
    </location>
    <ligand>
        <name>GTP</name>
        <dbReference type="ChEBI" id="CHEBI:37565"/>
    </ligand>
</feature>
<feature type="binding site" evidence="3">
    <location>
        <position position="261"/>
    </location>
    <ligand>
        <name>GTP</name>
        <dbReference type="ChEBI" id="CHEBI:37565"/>
    </ligand>
</feature>
<feature type="binding site" evidence="3">
    <location>
        <position position="261"/>
    </location>
    <ligand>
        <name>Mg(2+)</name>
        <dbReference type="ChEBI" id="CHEBI:18420"/>
    </ligand>
</feature>
<feature type="binding site" evidence="3">
    <location>
        <position position="283"/>
    </location>
    <ligand>
        <name>GTP</name>
        <dbReference type="ChEBI" id="CHEBI:37565"/>
    </ligand>
</feature>
<feature type="binding site" evidence="3">
    <location>
        <position position="349"/>
    </location>
    <ligand>
        <name>GTP</name>
        <dbReference type="ChEBI" id="CHEBI:37565"/>
    </ligand>
</feature>
<feature type="binding site" evidence="3">
    <location>
        <position position="350"/>
    </location>
    <ligand>
        <name>GTP</name>
        <dbReference type="ChEBI" id="CHEBI:37565"/>
    </ligand>
</feature>
<feature type="binding site" evidence="3">
    <location>
        <position position="352"/>
    </location>
    <ligand>
        <name>GTP</name>
        <dbReference type="ChEBI" id="CHEBI:37565"/>
    </ligand>
</feature>
<feature type="binding site" evidence="3">
    <location>
        <position position="404"/>
    </location>
    <ligand>
        <name>GTP</name>
        <dbReference type="ChEBI" id="CHEBI:37565"/>
    </ligand>
</feature>
<feature type="lipid moiety-binding region" description="N-myristoyl glycine" evidence="2">
    <location>
        <position position="2"/>
    </location>
</feature>
<feature type="lipid moiety-binding region" description="S-palmitoyl cysteine" evidence="2">
    <location>
        <position position="4"/>
    </location>
</feature>
<feature type="sequence variant" description="In strain: ATCC 42163 / CBS 7823 / 68-5.">
    <original>GAD</original>
    <variation>MRRN</variation>
    <location>
        <begin position="373"/>
        <end position="375"/>
    </location>
</feature>
<feature type="sequence conflict" description="In Ref. 2; AAD46575." evidence="6" ref="2">
    <original>T</original>
    <variation>S</variation>
    <location>
        <position position="23"/>
    </location>
</feature>